<organism>
    <name type="scientific">Priestia megaterium</name>
    <name type="common">Bacillus megaterium</name>
    <dbReference type="NCBI Taxonomy" id="1404"/>
    <lineage>
        <taxon>Bacteria</taxon>
        <taxon>Bacillati</taxon>
        <taxon>Bacillota</taxon>
        <taxon>Bacilli</taxon>
        <taxon>Bacillales</taxon>
        <taxon>Bacillaceae</taxon>
        <taxon>Priestia</taxon>
    </lineage>
</organism>
<evidence type="ECO:0000269" key="1">
    <source>
    </source>
</evidence>
<evidence type="ECO:0000305" key="2"/>
<reference key="1">
    <citation type="journal article" date="1986" name="J. Bacteriol.">
        <title>Genes for Bacillus megaterium small, acid-soluble spore proteins: cloning and nucleotide sequence of three additional genes from this multigene family.</title>
        <authorList>
            <person name="Fliss E.R."/>
            <person name="Loshon C.A."/>
            <person name="Setlow P."/>
        </authorList>
    </citation>
    <scope>NUCLEOTIDE SEQUENCE [GENOMIC DNA]</scope>
</reference>
<reference key="2">
    <citation type="journal article" date="1979" name="J. Biol. Chem.">
        <title>Covalent structure of protein A. A low molecular weight protein degraded during germination of Bacillus megaterium spores.</title>
        <authorList>
            <person name="Setlow P."/>
            <person name="Ozols J."/>
        </authorList>
    </citation>
    <scope>PROTEIN SEQUENCE OF 2-62</scope>
</reference>
<name>SASA_PRIMG</name>
<keyword id="KW-0903">Direct protein sequencing</keyword>
<keyword id="KW-0238">DNA-binding</keyword>
<keyword id="KW-0749">Sporulation</keyword>
<protein>
    <recommendedName>
        <fullName>Small, acid-soluble spore protein A</fullName>
        <shortName>SASP</shortName>
    </recommendedName>
</protein>
<sequence>MANTNKLVAPGSAAAIDQMKYEIASEFGVNLGPEATARANGSVGGEITKRLVQMAEQQLGGK</sequence>
<gene>
    <name type="primary">sasP-A</name>
</gene>
<accession>P02959</accession>
<proteinExistence type="evidence at protein level"/>
<feature type="initiator methionine" description="Removed" evidence="1">
    <location>
        <position position="1"/>
    </location>
</feature>
<feature type="chain" id="PRO_0000196292" description="Small, acid-soluble spore protein A">
    <location>
        <begin position="2"/>
        <end position="62"/>
    </location>
</feature>
<feature type="site" description="Cleavage; by spore protease">
    <location>
        <begin position="22"/>
        <end position="23"/>
    </location>
</feature>
<dbReference type="EMBL" id="M14109">
    <property type="protein sequence ID" value="AAA22285.1"/>
    <property type="molecule type" value="Genomic_DNA"/>
</dbReference>
<dbReference type="PIR" id="A24543">
    <property type="entry name" value="USBSAM"/>
</dbReference>
<dbReference type="RefSeq" id="WP_013059477.1">
    <property type="nucleotide sequence ID" value="NZ_WWFB01000002.1"/>
</dbReference>
<dbReference type="SMR" id="P02959"/>
<dbReference type="GO" id="GO:0003690">
    <property type="term" value="F:double-stranded DNA binding"/>
    <property type="evidence" value="ECO:0007669"/>
    <property type="project" value="InterPro"/>
</dbReference>
<dbReference type="GO" id="GO:0006265">
    <property type="term" value="P:DNA topological change"/>
    <property type="evidence" value="ECO:0007669"/>
    <property type="project" value="InterPro"/>
</dbReference>
<dbReference type="GO" id="GO:0030435">
    <property type="term" value="P:sporulation resulting in formation of a cellular spore"/>
    <property type="evidence" value="ECO:0007669"/>
    <property type="project" value="UniProtKB-KW"/>
</dbReference>
<dbReference type="Gene3D" id="6.10.10.80">
    <property type="entry name" value="Small, acid-soluble spore protein, alpha/beta type-like"/>
    <property type="match status" value="1"/>
</dbReference>
<dbReference type="InterPro" id="IPR001448">
    <property type="entry name" value="SASP_alpha/beta-type"/>
</dbReference>
<dbReference type="InterPro" id="IPR018126">
    <property type="entry name" value="SASP_alpha/beta-type_CS"/>
</dbReference>
<dbReference type="InterPro" id="IPR050847">
    <property type="entry name" value="SASP_DNA-binding"/>
</dbReference>
<dbReference type="InterPro" id="IPR038300">
    <property type="entry name" value="SASP_sf_alpha/beta"/>
</dbReference>
<dbReference type="PANTHER" id="PTHR36107">
    <property type="entry name" value="SMALL, ACID-SOLUBLE SPORE PROTEIN A"/>
    <property type="match status" value="1"/>
</dbReference>
<dbReference type="PANTHER" id="PTHR36107:SF1">
    <property type="entry name" value="SMALL, ACID-SOLUBLE SPORE PROTEIN A"/>
    <property type="match status" value="1"/>
</dbReference>
<dbReference type="Pfam" id="PF00269">
    <property type="entry name" value="SASP"/>
    <property type="match status" value="1"/>
</dbReference>
<dbReference type="PROSITE" id="PS00304">
    <property type="entry name" value="SASP_1"/>
    <property type="match status" value="1"/>
</dbReference>
<dbReference type="PROSITE" id="PS00684">
    <property type="entry name" value="SASP_2"/>
    <property type="match status" value="1"/>
</dbReference>
<comment type="function">
    <text>SASP are bound to spore DNA. They are double-stranded DNA-binding proteins that cause DNA to change to an a-like conformation. They protect the DNA backbone from chemical and enzymatic cleavage and are thus involved in dormant spore's high resistance to UV light.</text>
</comment>
<comment type="miscellaneous">
    <text>SASP are degraded in the first minutes of spore germination and provide amino acids for both new protein synthesis and metabolism.</text>
</comment>
<comment type="similarity">
    <text evidence="2">Belongs to the alpha/beta-type SASP family.</text>
</comment>